<feature type="chain" id="PRO_0000417572" description="Bcl-2-binding component 3, isoforms 3/4">
    <location>
        <begin position="1"/>
        <end position="261"/>
    </location>
</feature>
<feature type="region of interest" description="Disordered" evidence="1">
    <location>
        <begin position="27"/>
        <end position="261"/>
    </location>
</feature>
<feature type="compositionally biased region" description="Low complexity" evidence="1">
    <location>
        <begin position="40"/>
        <end position="50"/>
    </location>
</feature>
<feature type="compositionally biased region" description="Pro residues" evidence="1">
    <location>
        <begin position="53"/>
        <end position="63"/>
    </location>
</feature>
<feature type="compositionally biased region" description="Low complexity" evidence="1">
    <location>
        <begin position="64"/>
        <end position="73"/>
    </location>
</feature>
<feature type="compositionally biased region" description="Basic residues" evidence="1">
    <location>
        <begin position="74"/>
        <end position="87"/>
    </location>
</feature>
<feature type="compositionally biased region" description="Basic residues" evidence="1">
    <location>
        <begin position="95"/>
        <end position="106"/>
    </location>
</feature>
<feature type="compositionally biased region" description="Low complexity" evidence="1">
    <location>
        <begin position="124"/>
        <end position="146"/>
    </location>
</feature>
<feature type="compositionally biased region" description="Gly residues" evidence="1">
    <location>
        <begin position="147"/>
        <end position="171"/>
    </location>
</feature>
<feature type="compositionally biased region" description="Low complexity" evidence="1">
    <location>
        <begin position="172"/>
        <end position="197"/>
    </location>
</feature>
<feature type="splice variant" id="VSP_043781" description="In isoform 3." evidence="3">
    <location>
        <begin position="30"/>
        <end position="189"/>
    </location>
</feature>
<comment type="function">
    <molecule>Isoform 3</molecule>
    <text evidence="2">Does not affect cell growth.</text>
</comment>
<comment type="subunit">
    <molecule>Isoform 3</molecule>
    <text evidence="2">Does not interact with BCL2.</text>
</comment>
<comment type="interaction">
    <interactant intactId="EBI-17289784">
        <id>Q96PG8</id>
    </interactant>
    <interactant intactId="EBI-750641">
        <id>Q5TD97</id>
        <label>FHL5</label>
    </interactant>
    <organismsDiffer>false</organismsDiffer>
    <experiments>3</experiments>
</comment>
<comment type="interaction">
    <interactant intactId="EBI-17289784">
        <id>Q96PG8</id>
    </interactant>
    <interactant intactId="EBI-740220">
        <id>O14964</id>
        <label>HGS</label>
    </interactant>
    <organismsDiffer>false</organismsDiffer>
    <experiments>3</experiments>
</comment>
<comment type="interaction">
    <interactant intactId="EBI-17289784">
        <id>Q96PG8</id>
    </interactant>
    <interactant intactId="EBI-18053395">
        <id>Q7Z5P4</id>
        <label>HSD17B13</label>
    </interactant>
    <organismsDiffer>false</organismsDiffer>
    <experiments>3</experiments>
</comment>
<comment type="interaction">
    <interactant intactId="EBI-17289784">
        <id>Q96PG8</id>
    </interactant>
    <interactant intactId="EBI-2858213">
        <id>Q86VE0</id>
        <label>MYPOP</label>
    </interactant>
    <organismsDiffer>false</organismsDiffer>
    <experiments>3</experiments>
</comment>
<comment type="interaction">
    <interactant intactId="EBI-17289784">
        <id>Q96PG8</id>
    </interactant>
    <interactant intactId="EBI-1246261">
        <id>O14561</id>
        <label>NDUFAB1</label>
    </interactant>
    <organismsDiffer>false</organismsDiffer>
    <experiments>3</experiments>
</comment>
<comment type="interaction">
    <interactant intactId="EBI-17289784">
        <id>Q96PG8</id>
    </interactant>
    <interactant intactId="EBI-1380492">
        <id>Q8TF42</id>
        <label>UBASH3B</label>
    </interactant>
    <organismsDiffer>false</organismsDiffer>
    <experiments>3</experiments>
</comment>
<comment type="interaction">
    <interactant intactId="EBI-17289784">
        <id>Q96PG8</id>
    </interactant>
    <interactant intactId="EBI-540834">
        <id>P61964</id>
        <label>WDR5</label>
    </interactant>
    <organismsDiffer>false</organismsDiffer>
    <experiments>3</experiments>
</comment>
<comment type="interaction">
    <interactant intactId="EBI-17289784">
        <id>Q96PG8</id>
    </interactant>
    <interactant intactId="EBI-11962468">
        <id>Q7Z4V0</id>
        <label>ZNF438</label>
    </interactant>
    <organismsDiffer>false</organismsDiffer>
    <experiments>3</experiments>
</comment>
<comment type="subcellular location">
    <text>Contrary to isoforms 1 and 2, isoform 3 does not localize to the mitochondria.</text>
</comment>
<comment type="alternative products">
    <event type="alternative splicing"/>
    <isoform>
        <id>Q96PG8-2</id>
        <name>4</name>
        <name>PUMA gamma</name>
        <sequence type="displayed"/>
    </isoform>
    <isoform>
        <id>Q96PG8-1</id>
        <name>3</name>
        <name>PUMA delta</name>
        <sequence type="described" ref="VSP_043781"/>
    </isoform>
    <isoform>
        <id>Q9BXH1-1</id>
        <name>1</name>
        <name>PUMA alpha</name>
        <sequence type="external"/>
    </isoform>
    <isoform>
        <id>Q9BXH1-2</id>
        <name>2</name>
        <name>PUMA beta</name>
        <sequence type="external"/>
    </isoform>
</comment>
<comment type="induction">
    <text evidence="2">Up-regulated by TP53.</text>
</comment>
<comment type="domain">
    <text evidence="4">Contrary to isoforms 1 and 2, isoforms 3 and 4 do not contain any BH3 motif.</text>
</comment>
<evidence type="ECO:0000256" key="1">
    <source>
        <dbReference type="SAM" id="MobiDB-lite"/>
    </source>
</evidence>
<evidence type="ECO:0000269" key="2">
    <source>
    </source>
</evidence>
<evidence type="ECO:0000303" key="3">
    <source>
    </source>
</evidence>
<evidence type="ECO:0000305" key="4">
    <source>
    </source>
</evidence>
<accession>Q96PG8</accession>
<gene>
    <name type="primary">BBC3</name>
    <name type="synonym">PUMA</name>
</gene>
<name>BBC3B_HUMAN</name>
<proteinExistence type="evidence at protein level"/>
<keyword id="KW-0025">Alternative splicing</keyword>
<keyword id="KW-1267">Proteomics identification</keyword>
<keyword id="KW-1185">Reference proteome</keyword>
<sequence length="261" mass="26498">MKFGMGSAQACPCQVPRAASTTWVPCQICGPRERHGPRTPGGQLPGARRGPGPRRPAPLPARPPGALGSVLRPLRARPGCRPRRPHPAARCLPLRPHRPTRRHRRPGGFPLAWGSPQPAPRPAPGRSSALALAGGAAPGVARAQRPGGSGGRSHPGGPGSPRGGGTVGPGDRGPAAADGGRPQRTVRAAETRGAAAAPPLTLEGPVQSHHGTPALTQGPQSPRDGAQLGACTRPVDVRDSGGRPLPPPDTLASAGDFLCTM</sequence>
<reference key="1">
    <citation type="journal article" date="2001" name="Mol. Cell">
        <title>PUMA, a novel proapoptotic gene, is induced by p53.</title>
        <authorList>
            <person name="Nakano K."/>
            <person name="Wousden K.H."/>
        </authorList>
    </citation>
    <scope>NUCLEOTIDE SEQUENCE [MRNA] (ISOFORMS 2; 3 AND 4)</scope>
    <scope>INDUCTION BY TP53</scope>
    <scope>SUBCELLULAR LOCATION (ISOFORM 3)</scope>
    <scope>LACK OF INTERACTION WITH BCL2 (ISOFORM 3)</scope>
</reference>
<reference key="2">
    <citation type="journal article" date="2004" name="Nature">
        <title>The DNA sequence and biology of human chromosome 19.</title>
        <authorList>
            <person name="Grimwood J."/>
            <person name="Gordon L.A."/>
            <person name="Olsen A.S."/>
            <person name="Terry A."/>
            <person name="Schmutz J."/>
            <person name="Lamerdin J.E."/>
            <person name="Hellsten U."/>
            <person name="Goodstein D."/>
            <person name="Couronne O."/>
            <person name="Tran-Gyamfi M."/>
            <person name="Aerts A."/>
            <person name="Altherr M."/>
            <person name="Ashworth L."/>
            <person name="Bajorek E."/>
            <person name="Black S."/>
            <person name="Branscomb E."/>
            <person name="Caenepeel S."/>
            <person name="Carrano A.V."/>
            <person name="Caoile C."/>
            <person name="Chan Y.M."/>
            <person name="Christensen M."/>
            <person name="Cleland C.A."/>
            <person name="Copeland A."/>
            <person name="Dalin E."/>
            <person name="Dehal P."/>
            <person name="Denys M."/>
            <person name="Detter J.C."/>
            <person name="Escobar J."/>
            <person name="Flowers D."/>
            <person name="Fotopulos D."/>
            <person name="Garcia C."/>
            <person name="Georgescu A.M."/>
            <person name="Glavina T."/>
            <person name="Gomez M."/>
            <person name="Gonzales E."/>
            <person name="Groza M."/>
            <person name="Hammon N."/>
            <person name="Hawkins T."/>
            <person name="Haydu L."/>
            <person name="Ho I."/>
            <person name="Huang W."/>
            <person name="Israni S."/>
            <person name="Jett J."/>
            <person name="Kadner K."/>
            <person name="Kimball H."/>
            <person name="Kobayashi A."/>
            <person name="Larionov V."/>
            <person name="Leem S.-H."/>
            <person name="Lopez F."/>
            <person name="Lou Y."/>
            <person name="Lowry S."/>
            <person name="Malfatti S."/>
            <person name="Martinez D."/>
            <person name="McCready P.M."/>
            <person name="Medina C."/>
            <person name="Morgan J."/>
            <person name="Nelson K."/>
            <person name="Nolan M."/>
            <person name="Ovcharenko I."/>
            <person name="Pitluck S."/>
            <person name="Pollard M."/>
            <person name="Popkie A.P."/>
            <person name="Predki P."/>
            <person name="Quan G."/>
            <person name="Ramirez L."/>
            <person name="Rash S."/>
            <person name="Retterer J."/>
            <person name="Rodriguez A."/>
            <person name="Rogers S."/>
            <person name="Salamov A."/>
            <person name="Salazar A."/>
            <person name="She X."/>
            <person name="Smith D."/>
            <person name="Slezak T."/>
            <person name="Solovyev V."/>
            <person name="Thayer N."/>
            <person name="Tice H."/>
            <person name="Tsai M."/>
            <person name="Ustaszewska A."/>
            <person name="Vo N."/>
            <person name="Wagner M."/>
            <person name="Wheeler J."/>
            <person name="Wu K."/>
            <person name="Xie G."/>
            <person name="Yang J."/>
            <person name="Dubchak I."/>
            <person name="Furey T.S."/>
            <person name="DeJong P."/>
            <person name="Dickson M."/>
            <person name="Gordon D."/>
            <person name="Eichler E.E."/>
            <person name="Pennacchio L.A."/>
            <person name="Richardson P."/>
            <person name="Stubbs L."/>
            <person name="Rokhsar D.S."/>
            <person name="Myers R.M."/>
            <person name="Rubin E.M."/>
            <person name="Lucas S.M."/>
        </authorList>
    </citation>
    <scope>NUCLEOTIDE SEQUENCE [LARGE SCALE GENOMIC DNA]</scope>
</reference>
<reference key="3">
    <citation type="submission" date="2005-07" db="EMBL/GenBank/DDBJ databases">
        <authorList>
            <person name="Mural R.J."/>
            <person name="Istrail S."/>
            <person name="Sutton G."/>
            <person name="Florea L."/>
            <person name="Halpern A.L."/>
            <person name="Mobarry C.M."/>
            <person name="Lippert R."/>
            <person name="Walenz B."/>
            <person name="Shatkay H."/>
            <person name="Dew I."/>
            <person name="Miller J.R."/>
            <person name="Flanigan M.J."/>
            <person name="Edwards N.J."/>
            <person name="Bolanos R."/>
            <person name="Fasulo D."/>
            <person name="Halldorsson B.V."/>
            <person name="Hannenhalli S."/>
            <person name="Turner R."/>
            <person name="Yooseph S."/>
            <person name="Lu F."/>
            <person name="Nusskern D.R."/>
            <person name="Shue B.C."/>
            <person name="Zheng X.H."/>
            <person name="Zhong F."/>
            <person name="Delcher A.L."/>
            <person name="Huson D.H."/>
            <person name="Kravitz S.A."/>
            <person name="Mouchard L."/>
            <person name="Reinert K."/>
            <person name="Remington K.A."/>
            <person name="Clark A.G."/>
            <person name="Waterman M.S."/>
            <person name="Eichler E.E."/>
            <person name="Adams M.D."/>
            <person name="Hunkapiller M.W."/>
            <person name="Myers E.W."/>
            <person name="Venter J.C."/>
        </authorList>
    </citation>
    <scope>NUCLEOTIDE SEQUENCE [LARGE SCALE GENOMIC DNA]</scope>
</reference>
<dbReference type="EMBL" id="AF354656">
    <property type="protein sequence ID" value="AAK39544.1"/>
    <property type="molecule type" value="mRNA"/>
</dbReference>
<dbReference type="EMBL" id="AC008532">
    <property type="status" value="NOT_ANNOTATED_CDS"/>
    <property type="molecule type" value="Genomic_DNA"/>
</dbReference>
<dbReference type="EMBL" id="CH471126">
    <property type="protein sequence ID" value="EAW57467.1"/>
    <property type="molecule type" value="Genomic_DNA"/>
</dbReference>
<dbReference type="CCDS" id="CCDS46128.1">
    <molecule id="Q96PG8-1"/>
</dbReference>
<dbReference type="CCDS" id="CCDS46129.1">
    <molecule id="Q96PG8-2"/>
</dbReference>
<dbReference type="RefSeq" id="NP_001120712.1">
    <molecule id="Q96PG8-2"/>
    <property type="nucleotide sequence ID" value="NM_001127240.3"/>
</dbReference>
<dbReference type="RefSeq" id="NP_001120714.1">
    <molecule id="Q96PG8-1"/>
    <property type="nucleotide sequence ID" value="NM_001127242.3"/>
</dbReference>
<dbReference type="BioGRID" id="118009">
    <property type="interactions" value="36"/>
</dbReference>
<dbReference type="FunCoup" id="Q96PG8">
    <property type="interactions" value="432"/>
</dbReference>
<dbReference type="IntAct" id="Q96PG8">
    <property type="interactions" value="13"/>
</dbReference>
<dbReference type="STRING" id="9606.ENSP00000404503"/>
<dbReference type="iPTMnet" id="Q96PG8"/>
<dbReference type="PhosphoSitePlus" id="Q96PG8"/>
<dbReference type="BioMuta" id="BBC3"/>
<dbReference type="DMDM" id="391738062"/>
<dbReference type="jPOST" id="Q96PG8"/>
<dbReference type="MassIVE" id="Q96PG8"/>
<dbReference type="PaxDb" id="9606-ENSP00000404503"/>
<dbReference type="PeptideAtlas" id="Q96PG8"/>
<dbReference type="ProteomicsDB" id="77692">
    <molecule id="Q96PG8-2"/>
</dbReference>
<dbReference type="ProteomicsDB" id="77693">
    <molecule id="Q96PG8-1"/>
</dbReference>
<dbReference type="Antibodypedia" id="3572">
    <property type="antibodies" value="790 antibodies from 44 providers"/>
</dbReference>
<dbReference type="DNASU" id="27113"/>
<dbReference type="Ensembl" id="ENST00000300880.11">
    <molecule id="Q96PG8-1"/>
    <property type="protein sequence ID" value="ENSP00000300880.7"/>
    <property type="gene ID" value="ENSG00000105327.18"/>
</dbReference>
<dbReference type="Ensembl" id="ENST00000449228.5">
    <molecule id="Q96PG8-2"/>
    <property type="protein sequence ID" value="ENSP00000404503.1"/>
    <property type="gene ID" value="ENSG00000105327.18"/>
</dbReference>
<dbReference type="GeneID" id="27113"/>
<dbReference type="KEGG" id="hsa:27113"/>
<dbReference type="UCSC" id="uc010ekz.4">
    <molecule id="Q96PG8-2"/>
    <property type="organism name" value="human"/>
</dbReference>
<dbReference type="AGR" id="HGNC:17868"/>
<dbReference type="CTD" id="27113"/>
<dbReference type="DisGeNET" id="27113"/>
<dbReference type="GeneCards" id="BBC3"/>
<dbReference type="HGNC" id="HGNC:17868">
    <property type="gene designation" value="BBC3"/>
</dbReference>
<dbReference type="HPA" id="ENSG00000105327">
    <property type="expression patterns" value="Low tissue specificity"/>
</dbReference>
<dbReference type="MalaCards" id="BBC3"/>
<dbReference type="MIM" id="605854">
    <property type="type" value="gene"/>
</dbReference>
<dbReference type="neXtProt" id="NX_Q96PG8"/>
<dbReference type="OpenTargets" id="ENSG00000105327"/>
<dbReference type="PharmGKB" id="PA38471"/>
<dbReference type="VEuPathDB" id="HostDB:ENSG00000105327"/>
<dbReference type="eggNOG" id="ENOG502TE60">
    <property type="taxonomic scope" value="Eukaryota"/>
</dbReference>
<dbReference type="GeneTree" id="ENSGT00390000002767"/>
<dbReference type="HOGENOM" id="CLU_093513_0_0_1"/>
<dbReference type="InParanoid" id="Q96PG8"/>
<dbReference type="OMA" id="GGFPLAW"/>
<dbReference type="OrthoDB" id="9540104at2759"/>
<dbReference type="PAN-GO" id="Q96PG8">
    <property type="GO annotations" value="7 GO annotations based on evolutionary models"/>
</dbReference>
<dbReference type="PhylomeDB" id="Q96PG8"/>
<dbReference type="PathwayCommons" id="Q96PG8"/>
<dbReference type="SignaLink" id="Q96PG8"/>
<dbReference type="SIGNOR" id="Q96PG8"/>
<dbReference type="BioGRID-ORCS" id="27113">
    <property type="hits" value="22 hits in 1161 CRISPR screens"/>
</dbReference>
<dbReference type="ChiTaRS" id="BBC3">
    <property type="organism name" value="human"/>
</dbReference>
<dbReference type="GeneWiki" id="P53_upregulated_modulator_of_apoptosis"/>
<dbReference type="GenomeRNAi" id="27113"/>
<dbReference type="Pharos" id="Q96PG8">
    <property type="development level" value="Tbio"/>
</dbReference>
<dbReference type="Proteomes" id="UP000005640">
    <property type="component" value="Chromosome 19"/>
</dbReference>
<dbReference type="RNAct" id="Q96PG8">
    <property type="molecule type" value="protein"/>
</dbReference>
<dbReference type="Bgee" id="ENSG00000105327">
    <property type="expression patterns" value="Expressed in type B pancreatic cell and 182 other cell types or tissues"/>
</dbReference>
<dbReference type="ExpressionAtlas" id="Q96PG8">
    <property type="expression patterns" value="baseline and differential"/>
</dbReference>
<dbReference type="GO" id="GO:0005739">
    <property type="term" value="C:mitochondrion"/>
    <property type="evidence" value="ECO:0000318"/>
    <property type="project" value="GO_Central"/>
</dbReference>
<dbReference type="GO" id="GO:0051117">
    <property type="term" value="F:ATPase binding"/>
    <property type="evidence" value="ECO:0000353"/>
    <property type="project" value="ParkinsonsUK-UCL"/>
</dbReference>
<dbReference type="GO" id="GO:0006915">
    <property type="term" value="P:apoptotic process"/>
    <property type="evidence" value="ECO:0000315"/>
    <property type="project" value="ParkinsonsUK-UCL"/>
</dbReference>
<dbReference type="GO" id="GO:0097194">
    <property type="term" value="P:execution phase of apoptosis"/>
    <property type="evidence" value="ECO:0000318"/>
    <property type="project" value="GO_Central"/>
</dbReference>
<dbReference type="GO" id="GO:0070059">
    <property type="term" value="P:intrinsic apoptotic signaling pathway in response to endoplasmic reticulum stress"/>
    <property type="evidence" value="ECO:0000318"/>
    <property type="project" value="GO_Central"/>
</dbReference>
<dbReference type="GO" id="GO:2001244">
    <property type="term" value="P:positive regulation of intrinsic apoptotic signaling pathway"/>
    <property type="evidence" value="ECO:0000250"/>
    <property type="project" value="UniProtKB"/>
</dbReference>
<dbReference type="GO" id="GO:0090200">
    <property type="term" value="P:positive regulation of release of cytochrome c from mitochondria"/>
    <property type="evidence" value="ECO:0000318"/>
    <property type="project" value="GO_Central"/>
</dbReference>
<dbReference type="GO" id="GO:0001836">
    <property type="term" value="P:release of cytochrome c from mitochondria"/>
    <property type="evidence" value="ECO:0000318"/>
    <property type="project" value="GO_Central"/>
</dbReference>
<dbReference type="InterPro" id="IPR031661">
    <property type="entry name" value="Bbc3"/>
</dbReference>
<dbReference type="PANTHER" id="PTHR28639">
    <property type="entry name" value="BCL-2-BINDING COMPONENT 3"/>
    <property type="match status" value="1"/>
</dbReference>
<dbReference type="PANTHER" id="PTHR28639:SF1">
    <property type="entry name" value="BCL-2-BINDING COMPONENT 3, ISOFORMS 3_4"/>
    <property type="match status" value="1"/>
</dbReference>
<organism>
    <name type="scientific">Homo sapiens</name>
    <name type="common">Human</name>
    <dbReference type="NCBI Taxonomy" id="9606"/>
    <lineage>
        <taxon>Eukaryota</taxon>
        <taxon>Metazoa</taxon>
        <taxon>Chordata</taxon>
        <taxon>Craniata</taxon>
        <taxon>Vertebrata</taxon>
        <taxon>Euteleostomi</taxon>
        <taxon>Mammalia</taxon>
        <taxon>Eutheria</taxon>
        <taxon>Euarchontoglires</taxon>
        <taxon>Primates</taxon>
        <taxon>Haplorrhini</taxon>
        <taxon>Catarrhini</taxon>
        <taxon>Hominidae</taxon>
        <taxon>Homo</taxon>
    </lineage>
</organism>
<protein>
    <recommendedName>
        <fullName>Bcl-2-binding component 3, isoforms 3/4</fullName>
    </recommendedName>
    <alternativeName>
        <fullName>JFY-1</fullName>
    </alternativeName>
    <alternativeName>
        <fullName>p53 up-regulated modulator of apoptosis</fullName>
    </alternativeName>
</protein>